<protein>
    <recommendedName>
        <fullName>Dihydromonapterin reductase</fullName>
        <shortName>H(2)-MPt reductase</shortName>
        <ecNumber evidence="1">1.5.1.50</ecNumber>
    </recommendedName>
    <alternativeName>
        <fullName>Dihydrofolate reductase</fullName>
        <shortName>DHFR</shortName>
        <ecNumber evidence="1">1.5.1.3</ecNumber>
    </alternativeName>
</protein>
<keyword id="KW-0521">NADP</keyword>
<keyword id="KW-0554">One-carbon metabolism</keyword>
<keyword id="KW-0560">Oxidoreductase</keyword>
<evidence type="ECO:0000250" key="1">
    <source>
        <dbReference type="UniProtKB" id="P0AFS3"/>
    </source>
</evidence>
<evidence type="ECO:0000255" key="2">
    <source>
        <dbReference type="PROSITE-ProRule" id="PRU10001"/>
    </source>
</evidence>
<evidence type="ECO:0000305" key="3"/>
<sequence>MGKTQPLPILITGGGRRIGLALAWHFINQKQPVIVSYRTHYPAIDGLINAGAQCIQADFSTNDGVMAFADEVLKSTHGLRAILHNASAWMAEKPGAPLADVLACMMQIHVNTPYLLNHALERLLRGHGHAASDIIHFTDYVVERGSDKHIAYAASKAALDNMTRSFARKLAPEVKVNSIAPSLILFNEHDDAEYRQQALNKSLMKTAPGEKEVIDLVDYLLTSCFVTGRSFPLDGGRHLR</sequence>
<proteinExistence type="inferred from homology"/>
<dbReference type="EC" id="1.5.1.50" evidence="1"/>
<dbReference type="EC" id="1.5.1.3" evidence="1"/>
<dbReference type="EMBL" id="CP000802">
    <property type="protein sequence ID" value="ABV06002.1"/>
    <property type="molecule type" value="Genomic_DNA"/>
</dbReference>
<dbReference type="RefSeq" id="WP_000520804.1">
    <property type="nucleotide sequence ID" value="NC_009800.1"/>
</dbReference>
<dbReference type="SMR" id="A8A0E8"/>
<dbReference type="KEGG" id="ecx:EcHS_A1681"/>
<dbReference type="HOGENOM" id="CLU_010194_1_3_6"/>
<dbReference type="GO" id="GO:0004146">
    <property type="term" value="F:dihydrofolate reductase activity"/>
    <property type="evidence" value="ECO:0007669"/>
    <property type="project" value="UniProtKB-EC"/>
</dbReference>
<dbReference type="GO" id="GO:0006730">
    <property type="term" value="P:one-carbon metabolic process"/>
    <property type="evidence" value="ECO:0007669"/>
    <property type="project" value="UniProtKB-KW"/>
</dbReference>
<dbReference type="CDD" id="cd05357">
    <property type="entry name" value="PR_SDR_c"/>
    <property type="match status" value="1"/>
</dbReference>
<dbReference type="FunFam" id="3.40.50.720:FF:000225">
    <property type="entry name" value="Dihydrofolate reductase FolM"/>
    <property type="match status" value="1"/>
</dbReference>
<dbReference type="Gene3D" id="3.40.50.720">
    <property type="entry name" value="NAD(P)-binding Rossmann-like Domain"/>
    <property type="match status" value="1"/>
</dbReference>
<dbReference type="InterPro" id="IPR036291">
    <property type="entry name" value="NAD(P)-bd_dom_sf"/>
</dbReference>
<dbReference type="InterPro" id="IPR020904">
    <property type="entry name" value="Sc_DH/Rdtase_CS"/>
</dbReference>
<dbReference type="InterPro" id="IPR002347">
    <property type="entry name" value="SDR_fam"/>
</dbReference>
<dbReference type="NCBIfam" id="NF005066">
    <property type="entry name" value="PRK06483.1"/>
    <property type="match status" value="1"/>
</dbReference>
<dbReference type="PANTHER" id="PTHR43639:SF6">
    <property type="entry name" value="DIHYDROMONAPTERIN REDUCTASE"/>
    <property type="match status" value="1"/>
</dbReference>
<dbReference type="PANTHER" id="PTHR43639">
    <property type="entry name" value="OXIDOREDUCTASE, SHORT-CHAIN DEHYDROGENASE/REDUCTASE FAMILY (AFU_ORTHOLOGUE AFUA_5G02870)"/>
    <property type="match status" value="1"/>
</dbReference>
<dbReference type="Pfam" id="PF13561">
    <property type="entry name" value="adh_short_C2"/>
    <property type="match status" value="1"/>
</dbReference>
<dbReference type="PRINTS" id="PR00081">
    <property type="entry name" value="GDHRDH"/>
</dbReference>
<dbReference type="SUPFAM" id="SSF51735">
    <property type="entry name" value="NAD(P)-binding Rossmann-fold domains"/>
    <property type="match status" value="1"/>
</dbReference>
<dbReference type="PROSITE" id="PS00061">
    <property type="entry name" value="ADH_SHORT"/>
    <property type="match status" value="1"/>
</dbReference>
<accession>A8A0E8</accession>
<comment type="function">
    <text evidence="1">Catalyzes the reduction of dihydromonapterin to tetrahydromonapterin. Also has lower activity with dihydrofolate.</text>
</comment>
<comment type="catalytic activity">
    <reaction evidence="1">
        <text>(6S)-5,6,7,8-tetrahydrofolate + NADP(+) = 7,8-dihydrofolate + NADPH + H(+)</text>
        <dbReference type="Rhea" id="RHEA:15009"/>
        <dbReference type="ChEBI" id="CHEBI:15378"/>
        <dbReference type="ChEBI" id="CHEBI:57451"/>
        <dbReference type="ChEBI" id="CHEBI:57453"/>
        <dbReference type="ChEBI" id="CHEBI:57783"/>
        <dbReference type="ChEBI" id="CHEBI:58349"/>
        <dbReference type="EC" id="1.5.1.3"/>
    </reaction>
</comment>
<comment type="catalytic activity">
    <reaction evidence="1">
        <text>7,8-dihydromonapterin + NADPH + H(+) = 5,6,7,8-tetrahydromonapterin + NADP(+)</text>
        <dbReference type="Rhea" id="RHEA:34847"/>
        <dbReference type="ChEBI" id="CHEBI:15378"/>
        <dbReference type="ChEBI" id="CHEBI:57783"/>
        <dbReference type="ChEBI" id="CHEBI:58349"/>
        <dbReference type="ChEBI" id="CHEBI:71175"/>
        <dbReference type="ChEBI" id="CHEBI:71177"/>
        <dbReference type="EC" id="1.5.1.50"/>
    </reaction>
</comment>
<comment type="similarity">
    <text evidence="3">Belongs to the short-chain dehydrogenases/reductases (SDR) family. FolM subfamily.</text>
</comment>
<feature type="chain" id="PRO_0000339397" description="Dihydromonapterin reductase">
    <location>
        <begin position="1"/>
        <end position="240"/>
    </location>
</feature>
<feature type="active site" description="Proton acceptor" evidence="2">
    <location>
        <position position="152"/>
    </location>
</feature>
<name>FOLM_ECOHS</name>
<organism>
    <name type="scientific">Escherichia coli O9:H4 (strain HS)</name>
    <dbReference type="NCBI Taxonomy" id="331112"/>
    <lineage>
        <taxon>Bacteria</taxon>
        <taxon>Pseudomonadati</taxon>
        <taxon>Pseudomonadota</taxon>
        <taxon>Gammaproteobacteria</taxon>
        <taxon>Enterobacterales</taxon>
        <taxon>Enterobacteriaceae</taxon>
        <taxon>Escherichia</taxon>
    </lineage>
</organism>
<reference key="1">
    <citation type="journal article" date="2008" name="J. Bacteriol.">
        <title>The pangenome structure of Escherichia coli: comparative genomic analysis of E. coli commensal and pathogenic isolates.</title>
        <authorList>
            <person name="Rasko D.A."/>
            <person name="Rosovitz M.J."/>
            <person name="Myers G.S.A."/>
            <person name="Mongodin E.F."/>
            <person name="Fricke W.F."/>
            <person name="Gajer P."/>
            <person name="Crabtree J."/>
            <person name="Sebaihia M."/>
            <person name="Thomson N.R."/>
            <person name="Chaudhuri R."/>
            <person name="Henderson I.R."/>
            <person name="Sperandio V."/>
            <person name="Ravel J."/>
        </authorList>
    </citation>
    <scope>NUCLEOTIDE SEQUENCE [LARGE SCALE GENOMIC DNA]</scope>
    <source>
        <strain>HS</strain>
    </source>
</reference>
<gene>
    <name type="primary">folM</name>
    <name type="ordered locus">EcHS_A1681</name>
</gene>